<sequence length="155" mass="17650">MADLTELMKNEVFMAFASYATIVLSKMMFMSTATAFYRLTRKVFANPEDCSSFGKGENAKKYLRTDERVERVRRAHLNDLENIVPFLGIGLLYSLSGPDLSTAILHFRLFVGARIYHTIAYLTPLPQPNRGLAFFLGYGVTLSMAYRLLKSRLYL</sequence>
<keyword id="KW-0007">Acetylation</keyword>
<keyword id="KW-0256">Endoplasmic reticulum</keyword>
<keyword id="KW-0472">Membrane</keyword>
<keyword id="KW-0496">Mitochondrion</keyword>
<keyword id="KW-1000">Mitochondrion outer membrane</keyword>
<keyword id="KW-1185">Reference proteome</keyword>
<keyword id="KW-0808">Transferase</keyword>
<keyword id="KW-0812">Transmembrane</keyword>
<keyword id="KW-1133">Transmembrane helix</keyword>
<reference key="1">
    <citation type="submission" date="1997-02" db="EMBL/GenBank/DDBJ databases">
        <authorList>
            <person name="Kawakami K."/>
            <person name="Kimura M."/>
            <person name="Suzuki H."/>
            <person name="Hamasima N."/>
        </authorList>
    </citation>
    <scope>NUCLEOTIDE SEQUENCE [MRNA]</scope>
</reference>
<name>MGST1_PIG</name>
<comment type="function">
    <text evidence="1">Conjugation of reduced glutathione to a wide number of exogenous and endogenous hydrophobic electrophiles.</text>
</comment>
<comment type="catalytic activity">
    <reaction evidence="1">
        <text>RX + glutathione = an S-substituted glutathione + a halide anion + H(+)</text>
        <dbReference type="Rhea" id="RHEA:16437"/>
        <dbReference type="ChEBI" id="CHEBI:15378"/>
        <dbReference type="ChEBI" id="CHEBI:16042"/>
        <dbReference type="ChEBI" id="CHEBI:17792"/>
        <dbReference type="ChEBI" id="CHEBI:57925"/>
        <dbReference type="ChEBI" id="CHEBI:90779"/>
        <dbReference type="EC" id="2.5.1.18"/>
    </reaction>
    <physiologicalReaction direction="left-to-right" evidence="1">
        <dbReference type="Rhea" id="RHEA:16438"/>
    </physiologicalReaction>
</comment>
<comment type="subunit">
    <text evidence="1">Homotrimer; The trimer binds only one molecule of glutathione.</text>
</comment>
<comment type="subcellular location">
    <subcellularLocation>
        <location evidence="1">Endoplasmic reticulum membrane</location>
        <topology evidence="3">Multi-pass membrane protein</topology>
    </subcellularLocation>
    <subcellularLocation>
        <location evidence="1">Mitochondrion outer membrane</location>
    </subcellularLocation>
</comment>
<comment type="similarity">
    <text evidence="4">Belongs to the MAPEG family.</text>
</comment>
<evidence type="ECO:0000250" key="1">
    <source>
        <dbReference type="UniProtKB" id="P08011"/>
    </source>
</evidence>
<evidence type="ECO:0000250" key="2">
    <source>
        <dbReference type="UniProtKB" id="Q91VS7"/>
    </source>
</evidence>
<evidence type="ECO:0000255" key="3"/>
<evidence type="ECO:0000305" key="4"/>
<feature type="chain" id="PRO_0000217738" description="Microsomal glutathione S-transferase 1">
    <location>
        <begin position="1"/>
        <end position="155"/>
    </location>
</feature>
<feature type="topological domain" description="Lumenal" evidence="1">
    <location>
        <begin position="3"/>
        <end position="9"/>
    </location>
</feature>
<feature type="transmembrane region" description="Helical" evidence="3">
    <location>
        <begin position="10"/>
        <end position="33"/>
    </location>
</feature>
<feature type="topological domain" description="Cytoplasmic" evidence="1">
    <location>
        <begin position="34"/>
        <end position="62"/>
    </location>
</feature>
<feature type="transmembrane region" description="Helical" evidence="3">
    <location>
        <begin position="63"/>
        <end position="96"/>
    </location>
</feature>
<feature type="topological domain" description="Lumenal" evidence="1">
    <location>
        <begin position="97"/>
        <end position="99"/>
    </location>
</feature>
<feature type="transmembrane region" description="Helical" evidence="3">
    <location>
        <begin position="100"/>
        <end position="123"/>
    </location>
</feature>
<feature type="topological domain" description="Cytoplasmic" evidence="1">
    <location>
        <begin position="124"/>
        <end position="128"/>
    </location>
</feature>
<feature type="transmembrane region" description="Helical" evidence="3">
    <location>
        <begin position="129"/>
        <end position="148"/>
    </location>
</feature>
<feature type="topological domain" description="Lumenal" evidence="1">
    <location>
        <begin position="149"/>
        <end position="155"/>
    </location>
</feature>
<feature type="binding site" evidence="1">
    <location>
        <position position="38"/>
    </location>
    <ligand>
        <name>glutathione</name>
        <dbReference type="ChEBI" id="CHEBI:57925"/>
    </ligand>
</feature>
<feature type="binding site" evidence="1">
    <location>
        <position position="73"/>
    </location>
    <ligand>
        <name>glutathione</name>
        <dbReference type="ChEBI" id="CHEBI:57925"/>
    </ligand>
</feature>
<feature type="binding site" evidence="1">
    <location>
        <position position="74"/>
    </location>
    <ligand>
        <name>glutathione</name>
        <dbReference type="ChEBI" id="CHEBI:57925"/>
    </ligand>
</feature>
<feature type="binding site" evidence="1">
    <location>
        <position position="76"/>
    </location>
    <ligand>
        <name>glutathione</name>
        <dbReference type="ChEBI" id="CHEBI:57925"/>
    </ligand>
</feature>
<feature type="binding site" evidence="1">
    <location>
        <position position="81"/>
    </location>
    <ligand>
        <name>glutathione</name>
        <dbReference type="ChEBI" id="CHEBI:57925"/>
    </ligand>
</feature>
<feature type="binding site" evidence="1">
    <location>
        <position position="121"/>
    </location>
    <ligand>
        <name>glutathione</name>
        <dbReference type="ChEBI" id="CHEBI:57925"/>
    </ligand>
</feature>
<feature type="modified residue" description="N6-acetyllysine" evidence="2">
    <location>
        <position position="42"/>
    </location>
</feature>
<feature type="modified residue" description="N6-acetyllysine" evidence="2">
    <location>
        <position position="55"/>
    </location>
</feature>
<feature type="modified residue" description="N6-acetyllysine" evidence="2">
    <location>
        <position position="60"/>
    </location>
</feature>
<gene>
    <name type="primary">MGST1</name>
    <name type="synonym">GST12</name>
</gene>
<organism>
    <name type="scientific">Sus scrofa</name>
    <name type="common">Pig</name>
    <dbReference type="NCBI Taxonomy" id="9823"/>
    <lineage>
        <taxon>Eukaryota</taxon>
        <taxon>Metazoa</taxon>
        <taxon>Chordata</taxon>
        <taxon>Craniata</taxon>
        <taxon>Vertebrata</taxon>
        <taxon>Euteleostomi</taxon>
        <taxon>Mammalia</taxon>
        <taxon>Eutheria</taxon>
        <taxon>Laurasiatheria</taxon>
        <taxon>Artiodactyla</taxon>
        <taxon>Suina</taxon>
        <taxon>Suidae</taxon>
        <taxon>Sus</taxon>
    </lineage>
</organism>
<proteinExistence type="evidence at transcript level"/>
<accession>P79382</accession>
<protein>
    <recommendedName>
        <fullName>Microsomal glutathione S-transferase 1</fullName>
        <shortName>Microsomal GST-1</shortName>
        <ecNumber evidence="1">2.5.1.18</ecNumber>
    </recommendedName>
    <alternativeName>
        <fullName>Microsomal GST-I</fullName>
    </alternativeName>
</protein>
<dbReference type="EC" id="2.5.1.18" evidence="1"/>
<dbReference type="EMBL" id="AB000884">
    <property type="protein sequence ID" value="BAA19201.1"/>
    <property type="molecule type" value="mRNA"/>
</dbReference>
<dbReference type="RefSeq" id="NP_999465.1">
    <property type="nucleotide sequence ID" value="NM_214300.2"/>
</dbReference>
<dbReference type="RefSeq" id="XP_020946828.1">
    <property type="nucleotide sequence ID" value="XM_021091169.1"/>
</dbReference>
<dbReference type="RefSeq" id="XP_020946829.1">
    <property type="nucleotide sequence ID" value="XM_021091170.1"/>
</dbReference>
<dbReference type="RefSeq" id="XP_020946830.1">
    <property type="nucleotide sequence ID" value="XM_021091171.1"/>
</dbReference>
<dbReference type="SMR" id="P79382"/>
<dbReference type="FunCoup" id="P79382">
    <property type="interactions" value="103"/>
</dbReference>
<dbReference type="STRING" id="9823.ENSSSCP00000038329"/>
<dbReference type="PeptideAtlas" id="P79382"/>
<dbReference type="Ensembl" id="ENSSSCT00000048776.2">
    <property type="protein sequence ID" value="ENSSSCP00000038329.1"/>
    <property type="gene ID" value="ENSSSCG00000032580.3"/>
</dbReference>
<dbReference type="Ensembl" id="ENSSSCT00015003957.1">
    <property type="protein sequence ID" value="ENSSSCP00015001378.1"/>
    <property type="gene ID" value="ENSSSCG00015003104.1"/>
</dbReference>
<dbReference type="Ensembl" id="ENSSSCT00025021694.1">
    <property type="protein sequence ID" value="ENSSSCP00025008928.1"/>
    <property type="gene ID" value="ENSSSCG00025016137.1"/>
</dbReference>
<dbReference type="Ensembl" id="ENSSSCT00030083657.1">
    <property type="protein sequence ID" value="ENSSSCP00030038426.1"/>
    <property type="gene ID" value="ENSSSCG00030059915.1"/>
</dbReference>
<dbReference type="Ensembl" id="ENSSSCT00035051698.1">
    <property type="protein sequence ID" value="ENSSSCP00035020735.1"/>
    <property type="gene ID" value="ENSSSCG00035038953.1"/>
</dbReference>
<dbReference type="Ensembl" id="ENSSSCT00040088442.1">
    <property type="protein sequence ID" value="ENSSSCP00040038872.1"/>
    <property type="gene ID" value="ENSSSCG00040064750.1"/>
</dbReference>
<dbReference type="Ensembl" id="ENSSSCT00045035331.1">
    <property type="protein sequence ID" value="ENSSSCP00045024519.1"/>
    <property type="gene ID" value="ENSSSCG00045020728.1"/>
</dbReference>
<dbReference type="Ensembl" id="ENSSSCT00045035372.1">
    <property type="protein sequence ID" value="ENSSSCP00045024554.1"/>
    <property type="gene ID" value="ENSSSCG00045020728.1"/>
</dbReference>
<dbReference type="Ensembl" id="ENSSSCT00050045888.1">
    <property type="protein sequence ID" value="ENSSSCP00050018865.1"/>
    <property type="gene ID" value="ENSSSCG00050034218.1"/>
</dbReference>
<dbReference type="Ensembl" id="ENSSSCT00055032068.1">
    <property type="protein sequence ID" value="ENSSSCP00055025531.1"/>
    <property type="gene ID" value="ENSSSCG00055016266.1"/>
</dbReference>
<dbReference type="Ensembl" id="ENSSSCT00060067096.1">
    <property type="protein sequence ID" value="ENSSSCP00060028737.1"/>
    <property type="gene ID" value="ENSSSCG00060049400.1"/>
</dbReference>
<dbReference type="Ensembl" id="ENSSSCT00065062036.1">
    <property type="protein sequence ID" value="ENSSSCP00065026886.1"/>
    <property type="gene ID" value="ENSSSCG00065045328.1"/>
</dbReference>
<dbReference type="Ensembl" id="ENSSSCT00070045300.1">
    <property type="protein sequence ID" value="ENSSSCP00070038179.1"/>
    <property type="gene ID" value="ENSSSCG00070022772.1"/>
</dbReference>
<dbReference type="Ensembl" id="ENSSSCT00085009332">
    <property type="protein sequence ID" value="ENSSSCP00085006752"/>
    <property type="gene ID" value="ENSSSCG00085004991"/>
</dbReference>
<dbReference type="Ensembl" id="ENSSSCT00090025784">
    <property type="protein sequence ID" value="ENSSSCP00090015840"/>
    <property type="gene ID" value="ENSSSCG00090014728"/>
</dbReference>
<dbReference type="Ensembl" id="ENSSSCT00105014752">
    <property type="protein sequence ID" value="ENSSSCP00105010711"/>
    <property type="gene ID" value="ENSSSCG00105007348"/>
</dbReference>
<dbReference type="Ensembl" id="ENSSSCT00110022515">
    <property type="protein sequence ID" value="ENSSSCP00110015262"/>
    <property type="gene ID" value="ENSSSCG00110011718"/>
</dbReference>
<dbReference type="Ensembl" id="ENSSSCT00115007560">
    <property type="protein sequence ID" value="ENSSSCP00115007089"/>
    <property type="gene ID" value="ENSSSCG00115004397"/>
</dbReference>
<dbReference type="Ensembl" id="ENSSSCT00130038184">
    <property type="protein sequence ID" value="ENSSSCP00130026860"/>
    <property type="gene ID" value="ENSSSCG00130019682"/>
</dbReference>
<dbReference type="GeneID" id="397567"/>
<dbReference type="KEGG" id="ssc:397567"/>
<dbReference type="CTD" id="4257"/>
<dbReference type="VGNC" id="VGNC:103301">
    <property type="gene designation" value="MGST1"/>
</dbReference>
<dbReference type="GeneTree" id="ENSGT00390000011980"/>
<dbReference type="InParanoid" id="P79382"/>
<dbReference type="OMA" id="RAQRCHH"/>
<dbReference type="OrthoDB" id="193139at2759"/>
<dbReference type="Reactome" id="R-SSC-156590">
    <property type="pathway name" value="Glutathione conjugation"/>
</dbReference>
<dbReference type="Reactome" id="R-SSC-5423646">
    <property type="pathway name" value="Aflatoxin activation and detoxification"/>
</dbReference>
<dbReference type="Reactome" id="R-SSC-6798695">
    <property type="pathway name" value="Neutrophil degranulation"/>
</dbReference>
<dbReference type="Proteomes" id="UP000008227">
    <property type="component" value="Chromosome 5"/>
</dbReference>
<dbReference type="Proteomes" id="UP000314985">
    <property type="component" value="Chromosome 5"/>
</dbReference>
<dbReference type="Proteomes" id="UP000694570">
    <property type="component" value="Unplaced"/>
</dbReference>
<dbReference type="Proteomes" id="UP000694571">
    <property type="component" value="Unplaced"/>
</dbReference>
<dbReference type="Proteomes" id="UP000694720">
    <property type="component" value="Unplaced"/>
</dbReference>
<dbReference type="Proteomes" id="UP000694722">
    <property type="component" value="Unplaced"/>
</dbReference>
<dbReference type="Proteomes" id="UP000694723">
    <property type="component" value="Unplaced"/>
</dbReference>
<dbReference type="Proteomes" id="UP000694724">
    <property type="component" value="Unplaced"/>
</dbReference>
<dbReference type="Proteomes" id="UP000694725">
    <property type="component" value="Unplaced"/>
</dbReference>
<dbReference type="Proteomes" id="UP000694726">
    <property type="component" value="Unplaced"/>
</dbReference>
<dbReference type="Proteomes" id="UP000694727">
    <property type="component" value="Unplaced"/>
</dbReference>
<dbReference type="Proteomes" id="UP000694728">
    <property type="component" value="Unplaced"/>
</dbReference>
<dbReference type="Bgee" id="ENSSSCG00000032580">
    <property type="expression patterns" value="Expressed in omentum and 42 other cell types or tissues"/>
</dbReference>
<dbReference type="GO" id="GO:0005783">
    <property type="term" value="C:endoplasmic reticulum"/>
    <property type="evidence" value="ECO:0000250"/>
    <property type="project" value="UniProtKB"/>
</dbReference>
<dbReference type="GO" id="GO:0005789">
    <property type="term" value="C:endoplasmic reticulum membrane"/>
    <property type="evidence" value="ECO:0007669"/>
    <property type="project" value="UniProtKB-SubCell"/>
</dbReference>
<dbReference type="GO" id="GO:0016020">
    <property type="term" value="C:membrane"/>
    <property type="evidence" value="ECO:0000250"/>
    <property type="project" value="UniProtKB"/>
</dbReference>
<dbReference type="GO" id="GO:0005741">
    <property type="term" value="C:mitochondrial outer membrane"/>
    <property type="evidence" value="ECO:0007669"/>
    <property type="project" value="UniProtKB-SubCell"/>
</dbReference>
<dbReference type="GO" id="GO:0005739">
    <property type="term" value="C:mitochondrion"/>
    <property type="evidence" value="ECO:0000318"/>
    <property type="project" value="GO_Central"/>
</dbReference>
<dbReference type="GO" id="GO:0004602">
    <property type="term" value="F:glutathione peroxidase activity"/>
    <property type="evidence" value="ECO:0007669"/>
    <property type="project" value="Ensembl"/>
</dbReference>
<dbReference type="GO" id="GO:0004364">
    <property type="term" value="F:glutathione transferase activity"/>
    <property type="evidence" value="ECO:0000318"/>
    <property type="project" value="GO_Central"/>
</dbReference>
<dbReference type="GO" id="GO:0071449">
    <property type="term" value="P:cellular response to lipid hydroperoxide"/>
    <property type="evidence" value="ECO:0007669"/>
    <property type="project" value="Ensembl"/>
</dbReference>
<dbReference type="GO" id="GO:0034635">
    <property type="term" value="P:glutathione transport"/>
    <property type="evidence" value="ECO:0007669"/>
    <property type="project" value="Ensembl"/>
</dbReference>
<dbReference type="FunFam" id="1.20.120.550:FF:000002">
    <property type="entry name" value="Microsomal glutathione S-transferase 1"/>
    <property type="match status" value="1"/>
</dbReference>
<dbReference type="Gene3D" id="1.20.120.550">
    <property type="entry name" value="Membrane associated eicosanoid/glutathione metabolism-like domain"/>
    <property type="match status" value="1"/>
</dbReference>
<dbReference type="InterPro" id="IPR023352">
    <property type="entry name" value="MAPEG-like_dom_sf"/>
</dbReference>
<dbReference type="InterPro" id="IPR001129">
    <property type="entry name" value="Membr-assoc_MAPEG"/>
</dbReference>
<dbReference type="InterPro" id="IPR040162">
    <property type="entry name" value="MGST1-like"/>
</dbReference>
<dbReference type="PANTHER" id="PTHR10689">
    <property type="entry name" value="MICROSOMAL GLUTATHIONE S-TRANSFERASE 1"/>
    <property type="match status" value="1"/>
</dbReference>
<dbReference type="PANTHER" id="PTHR10689:SF6">
    <property type="entry name" value="MICROSOMAL GLUTATHIONE S-TRANSFERASE 1"/>
    <property type="match status" value="1"/>
</dbReference>
<dbReference type="Pfam" id="PF01124">
    <property type="entry name" value="MAPEG"/>
    <property type="match status" value="1"/>
</dbReference>
<dbReference type="SUPFAM" id="SSF161084">
    <property type="entry name" value="MAPEG domain-like"/>
    <property type="match status" value="1"/>
</dbReference>